<name>RS2_BACVZ</name>
<evidence type="ECO:0000255" key="1">
    <source>
        <dbReference type="HAMAP-Rule" id="MF_00291"/>
    </source>
</evidence>
<evidence type="ECO:0000256" key="2">
    <source>
        <dbReference type="SAM" id="MobiDB-lite"/>
    </source>
</evidence>
<evidence type="ECO:0000305" key="3"/>
<comment type="similarity">
    <text evidence="1">Belongs to the universal ribosomal protein uS2 family.</text>
</comment>
<sequence length="246" mass="27924">MSVISMKQLLEAGVHFGHQTRRWNPKMKRYIFTERNGIYIIDLQKTVKKVEEAYNFTKNLAAEGGKILFVGTKKQAQDSVKEEAVRSGMYYVNQRWLGGTLTNFETIQKRIKRLKDIEKMQENGTFEVLPKKEVVQLKKELERLEKFLGGIKDMKDLPDALFIIDPRKERIAVAEARKLNIPIIGIVDTNCDPDEIDVVIPANDDAIRAVKLLTSKMADAILEAKQGEEEAEAAEETAPETETTTA</sequence>
<accession>A7Z4S0</accession>
<organism>
    <name type="scientific">Bacillus velezensis (strain DSM 23117 / BGSC 10A6 / LMG 26770 / FZB42)</name>
    <name type="common">Bacillus amyloliquefaciens subsp. plantarum</name>
    <dbReference type="NCBI Taxonomy" id="326423"/>
    <lineage>
        <taxon>Bacteria</taxon>
        <taxon>Bacillati</taxon>
        <taxon>Bacillota</taxon>
        <taxon>Bacilli</taxon>
        <taxon>Bacillales</taxon>
        <taxon>Bacillaceae</taxon>
        <taxon>Bacillus</taxon>
        <taxon>Bacillus amyloliquefaciens group</taxon>
    </lineage>
</organism>
<dbReference type="EMBL" id="CP000560">
    <property type="protein sequence ID" value="ABS73996.1"/>
    <property type="molecule type" value="Genomic_DNA"/>
</dbReference>
<dbReference type="RefSeq" id="WP_003154215.1">
    <property type="nucleotide sequence ID" value="NC_009725.2"/>
</dbReference>
<dbReference type="SMR" id="A7Z4S0"/>
<dbReference type="GeneID" id="93080766"/>
<dbReference type="KEGG" id="bay:RBAM_016330"/>
<dbReference type="HOGENOM" id="CLU_040318_1_2_9"/>
<dbReference type="Proteomes" id="UP000001120">
    <property type="component" value="Chromosome"/>
</dbReference>
<dbReference type="GO" id="GO:0022627">
    <property type="term" value="C:cytosolic small ribosomal subunit"/>
    <property type="evidence" value="ECO:0007669"/>
    <property type="project" value="TreeGrafter"/>
</dbReference>
<dbReference type="GO" id="GO:0003735">
    <property type="term" value="F:structural constituent of ribosome"/>
    <property type="evidence" value="ECO:0007669"/>
    <property type="project" value="InterPro"/>
</dbReference>
<dbReference type="GO" id="GO:0006412">
    <property type="term" value="P:translation"/>
    <property type="evidence" value="ECO:0007669"/>
    <property type="project" value="UniProtKB-UniRule"/>
</dbReference>
<dbReference type="CDD" id="cd01425">
    <property type="entry name" value="RPS2"/>
    <property type="match status" value="1"/>
</dbReference>
<dbReference type="FunFam" id="1.10.287.610:FF:000001">
    <property type="entry name" value="30S ribosomal protein S2"/>
    <property type="match status" value="1"/>
</dbReference>
<dbReference type="Gene3D" id="3.40.50.10490">
    <property type="entry name" value="Glucose-6-phosphate isomerase like protein, domain 1"/>
    <property type="match status" value="1"/>
</dbReference>
<dbReference type="Gene3D" id="1.10.287.610">
    <property type="entry name" value="Helix hairpin bin"/>
    <property type="match status" value="1"/>
</dbReference>
<dbReference type="HAMAP" id="MF_00291_B">
    <property type="entry name" value="Ribosomal_uS2_B"/>
    <property type="match status" value="1"/>
</dbReference>
<dbReference type="InterPro" id="IPR001865">
    <property type="entry name" value="Ribosomal_uS2"/>
</dbReference>
<dbReference type="InterPro" id="IPR005706">
    <property type="entry name" value="Ribosomal_uS2_bac/mit/plastid"/>
</dbReference>
<dbReference type="InterPro" id="IPR018130">
    <property type="entry name" value="Ribosomal_uS2_CS"/>
</dbReference>
<dbReference type="InterPro" id="IPR023591">
    <property type="entry name" value="Ribosomal_uS2_flav_dom_sf"/>
</dbReference>
<dbReference type="NCBIfam" id="TIGR01011">
    <property type="entry name" value="rpsB_bact"/>
    <property type="match status" value="1"/>
</dbReference>
<dbReference type="PANTHER" id="PTHR12534">
    <property type="entry name" value="30S RIBOSOMAL PROTEIN S2 PROKARYOTIC AND ORGANELLAR"/>
    <property type="match status" value="1"/>
</dbReference>
<dbReference type="PANTHER" id="PTHR12534:SF0">
    <property type="entry name" value="SMALL RIBOSOMAL SUBUNIT PROTEIN US2M"/>
    <property type="match status" value="1"/>
</dbReference>
<dbReference type="Pfam" id="PF00318">
    <property type="entry name" value="Ribosomal_S2"/>
    <property type="match status" value="1"/>
</dbReference>
<dbReference type="PRINTS" id="PR00395">
    <property type="entry name" value="RIBOSOMALS2"/>
</dbReference>
<dbReference type="SUPFAM" id="SSF52313">
    <property type="entry name" value="Ribosomal protein S2"/>
    <property type="match status" value="1"/>
</dbReference>
<dbReference type="PROSITE" id="PS00962">
    <property type="entry name" value="RIBOSOMAL_S2_1"/>
    <property type="match status" value="1"/>
</dbReference>
<dbReference type="PROSITE" id="PS00963">
    <property type="entry name" value="RIBOSOMAL_S2_2"/>
    <property type="match status" value="1"/>
</dbReference>
<protein>
    <recommendedName>
        <fullName evidence="1">Small ribosomal subunit protein uS2</fullName>
    </recommendedName>
    <alternativeName>
        <fullName evidence="3">30S ribosomal protein S2</fullName>
    </alternativeName>
</protein>
<proteinExistence type="inferred from homology"/>
<gene>
    <name evidence="1" type="primary">rpsB</name>
    <name type="ordered locus">RBAM_016330</name>
</gene>
<feature type="chain" id="PRO_1000003890" description="Small ribosomal subunit protein uS2">
    <location>
        <begin position="1"/>
        <end position="246"/>
    </location>
</feature>
<feature type="region of interest" description="Disordered" evidence="2">
    <location>
        <begin position="224"/>
        <end position="246"/>
    </location>
</feature>
<feature type="compositionally biased region" description="Acidic residues" evidence="2">
    <location>
        <begin position="229"/>
        <end position="239"/>
    </location>
</feature>
<keyword id="KW-0687">Ribonucleoprotein</keyword>
<keyword id="KW-0689">Ribosomal protein</keyword>
<reference key="1">
    <citation type="journal article" date="2007" name="Nat. Biotechnol.">
        <title>Comparative analysis of the complete genome sequence of the plant growth-promoting bacterium Bacillus amyloliquefaciens FZB42.</title>
        <authorList>
            <person name="Chen X.H."/>
            <person name="Koumoutsi A."/>
            <person name="Scholz R."/>
            <person name="Eisenreich A."/>
            <person name="Schneider K."/>
            <person name="Heinemeyer I."/>
            <person name="Morgenstern B."/>
            <person name="Voss B."/>
            <person name="Hess W.R."/>
            <person name="Reva O."/>
            <person name="Junge H."/>
            <person name="Voigt B."/>
            <person name="Jungblut P.R."/>
            <person name="Vater J."/>
            <person name="Suessmuth R."/>
            <person name="Liesegang H."/>
            <person name="Strittmatter A."/>
            <person name="Gottschalk G."/>
            <person name="Borriss R."/>
        </authorList>
    </citation>
    <scope>NUCLEOTIDE SEQUENCE [LARGE SCALE GENOMIC DNA]</scope>
    <source>
        <strain>DSM 23117 / BGSC 10A6 / LMG 26770 / FZB42</strain>
    </source>
</reference>